<gene>
    <name evidence="1" type="primary">tatA</name>
    <name type="ordered locus">R01529</name>
    <name type="ORF">SMc02067</name>
</gene>
<dbReference type="EMBL" id="AL591688">
    <property type="protein sequence ID" value="CAC46108.1"/>
    <property type="molecule type" value="Genomic_DNA"/>
</dbReference>
<dbReference type="RefSeq" id="NP_385635.1">
    <property type="nucleotide sequence ID" value="NC_003047.1"/>
</dbReference>
<dbReference type="RefSeq" id="WP_010969281.1">
    <property type="nucleotide sequence ID" value="NC_003047.1"/>
</dbReference>
<dbReference type="SMR" id="Q92Q25"/>
<dbReference type="EnsemblBacteria" id="CAC46108">
    <property type="protein sequence ID" value="CAC46108"/>
    <property type="gene ID" value="SMc02067"/>
</dbReference>
<dbReference type="KEGG" id="sme:SMc02067"/>
<dbReference type="PATRIC" id="fig|266834.11.peg.2952"/>
<dbReference type="eggNOG" id="COG1826">
    <property type="taxonomic scope" value="Bacteria"/>
</dbReference>
<dbReference type="HOGENOM" id="CLU_086034_5_0_5"/>
<dbReference type="OrthoDB" id="7161179at2"/>
<dbReference type="Proteomes" id="UP000001976">
    <property type="component" value="Chromosome"/>
</dbReference>
<dbReference type="GO" id="GO:0033281">
    <property type="term" value="C:TAT protein transport complex"/>
    <property type="evidence" value="ECO:0007669"/>
    <property type="project" value="UniProtKB-UniRule"/>
</dbReference>
<dbReference type="GO" id="GO:0008320">
    <property type="term" value="F:protein transmembrane transporter activity"/>
    <property type="evidence" value="ECO:0007669"/>
    <property type="project" value="UniProtKB-UniRule"/>
</dbReference>
<dbReference type="GO" id="GO:0043953">
    <property type="term" value="P:protein transport by the Tat complex"/>
    <property type="evidence" value="ECO:0007669"/>
    <property type="project" value="UniProtKB-UniRule"/>
</dbReference>
<dbReference type="Gene3D" id="1.20.5.3310">
    <property type="match status" value="1"/>
</dbReference>
<dbReference type="HAMAP" id="MF_00236">
    <property type="entry name" value="TatA_E"/>
    <property type="match status" value="1"/>
</dbReference>
<dbReference type="InterPro" id="IPR003369">
    <property type="entry name" value="TatA/B/E"/>
</dbReference>
<dbReference type="InterPro" id="IPR006312">
    <property type="entry name" value="TatA/E"/>
</dbReference>
<dbReference type="NCBIfam" id="NF001940">
    <property type="entry name" value="PRK00720.1"/>
    <property type="match status" value="1"/>
</dbReference>
<dbReference type="NCBIfam" id="TIGR01411">
    <property type="entry name" value="tatAE"/>
    <property type="match status" value="1"/>
</dbReference>
<dbReference type="PANTHER" id="PTHR42982">
    <property type="entry name" value="SEC-INDEPENDENT PROTEIN TRANSLOCASE PROTEIN TATA"/>
    <property type="match status" value="1"/>
</dbReference>
<dbReference type="PANTHER" id="PTHR42982:SF1">
    <property type="entry name" value="SEC-INDEPENDENT PROTEIN TRANSLOCASE PROTEIN TATA"/>
    <property type="match status" value="1"/>
</dbReference>
<dbReference type="Pfam" id="PF02416">
    <property type="entry name" value="TatA_B_E"/>
    <property type="match status" value="1"/>
</dbReference>
<comment type="function">
    <text evidence="1">Part of the twin-arginine translocation (Tat) system that transports large folded proteins containing a characteristic twin-arginine motif in their signal peptide across membranes. TatA could form the protein-conducting channel of the Tat system.</text>
</comment>
<comment type="subunit">
    <text evidence="1">The Tat system comprises two distinct complexes: a TatABC complex, containing multiple copies of TatA, TatB and TatC subunits, and a separate TatA complex, containing only TatA subunits. Substrates initially bind to the TatABC complex, which probably triggers association of the separate TatA complex to form the active translocon.</text>
</comment>
<comment type="subcellular location">
    <subcellularLocation>
        <location evidence="1">Cell inner membrane</location>
        <topology evidence="1">Single-pass membrane protein</topology>
    </subcellularLocation>
</comment>
<comment type="similarity">
    <text evidence="1">Belongs to the TatA/E family.</text>
</comment>
<feature type="chain" id="PRO_0000097954" description="Sec-independent protein translocase protein TatA">
    <location>
        <begin position="1"/>
        <end position="68"/>
    </location>
</feature>
<feature type="transmembrane region" description="Helical" evidence="1">
    <location>
        <begin position="1"/>
        <end position="21"/>
    </location>
</feature>
<feature type="region of interest" description="Disordered" evidence="2">
    <location>
        <begin position="42"/>
        <end position="68"/>
    </location>
</feature>
<feature type="compositionally biased region" description="Basic and acidic residues" evidence="2">
    <location>
        <begin position="53"/>
        <end position="68"/>
    </location>
</feature>
<name>TATA_RHIME</name>
<protein>
    <recommendedName>
        <fullName evidence="1">Sec-independent protein translocase protein TatA</fullName>
    </recommendedName>
</protein>
<organism>
    <name type="scientific">Rhizobium meliloti (strain 1021)</name>
    <name type="common">Ensifer meliloti</name>
    <name type="synonym">Sinorhizobium meliloti</name>
    <dbReference type="NCBI Taxonomy" id="266834"/>
    <lineage>
        <taxon>Bacteria</taxon>
        <taxon>Pseudomonadati</taxon>
        <taxon>Pseudomonadota</taxon>
        <taxon>Alphaproteobacteria</taxon>
        <taxon>Hyphomicrobiales</taxon>
        <taxon>Rhizobiaceae</taxon>
        <taxon>Sinorhizobium/Ensifer group</taxon>
        <taxon>Sinorhizobium</taxon>
    </lineage>
</organism>
<evidence type="ECO:0000255" key="1">
    <source>
        <dbReference type="HAMAP-Rule" id="MF_00236"/>
    </source>
</evidence>
<evidence type="ECO:0000256" key="2">
    <source>
        <dbReference type="SAM" id="MobiDB-lite"/>
    </source>
</evidence>
<accession>Q92Q25</accession>
<proteinExistence type="inferred from homology"/>
<keyword id="KW-0997">Cell inner membrane</keyword>
<keyword id="KW-1003">Cell membrane</keyword>
<keyword id="KW-0472">Membrane</keyword>
<keyword id="KW-0653">Protein transport</keyword>
<keyword id="KW-1185">Reference proteome</keyword>
<keyword id="KW-0811">Translocation</keyword>
<keyword id="KW-0812">Transmembrane</keyword>
<keyword id="KW-1133">Transmembrane helix</keyword>
<keyword id="KW-0813">Transport</keyword>
<reference key="1">
    <citation type="journal article" date="2001" name="Proc. Natl. Acad. Sci. U.S.A.">
        <title>Analysis of the chromosome sequence of the legume symbiont Sinorhizobium meliloti strain 1021.</title>
        <authorList>
            <person name="Capela D."/>
            <person name="Barloy-Hubler F."/>
            <person name="Gouzy J."/>
            <person name="Bothe G."/>
            <person name="Ampe F."/>
            <person name="Batut J."/>
            <person name="Boistard P."/>
            <person name="Becker A."/>
            <person name="Boutry M."/>
            <person name="Cadieu E."/>
            <person name="Dreano S."/>
            <person name="Gloux S."/>
            <person name="Godrie T."/>
            <person name="Goffeau A."/>
            <person name="Kahn D."/>
            <person name="Kiss E."/>
            <person name="Lelaure V."/>
            <person name="Masuy D."/>
            <person name="Pohl T."/>
            <person name="Portetelle D."/>
            <person name="Puehler A."/>
            <person name="Purnelle B."/>
            <person name="Ramsperger U."/>
            <person name="Renard C."/>
            <person name="Thebault P."/>
            <person name="Vandenbol M."/>
            <person name="Weidner S."/>
            <person name="Galibert F."/>
        </authorList>
    </citation>
    <scope>NUCLEOTIDE SEQUENCE [LARGE SCALE GENOMIC DNA]</scope>
    <source>
        <strain>1021</strain>
    </source>
</reference>
<reference key="2">
    <citation type="journal article" date="2001" name="Science">
        <title>The composite genome of the legume symbiont Sinorhizobium meliloti.</title>
        <authorList>
            <person name="Galibert F."/>
            <person name="Finan T.M."/>
            <person name="Long S.R."/>
            <person name="Puehler A."/>
            <person name="Abola P."/>
            <person name="Ampe F."/>
            <person name="Barloy-Hubler F."/>
            <person name="Barnett M.J."/>
            <person name="Becker A."/>
            <person name="Boistard P."/>
            <person name="Bothe G."/>
            <person name="Boutry M."/>
            <person name="Bowser L."/>
            <person name="Buhrmester J."/>
            <person name="Cadieu E."/>
            <person name="Capela D."/>
            <person name="Chain P."/>
            <person name="Cowie A."/>
            <person name="Davis R.W."/>
            <person name="Dreano S."/>
            <person name="Federspiel N.A."/>
            <person name="Fisher R.F."/>
            <person name="Gloux S."/>
            <person name="Godrie T."/>
            <person name="Goffeau A."/>
            <person name="Golding B."/>
            <person name="Gouzy J."/>
            <person name="Gurjal M."/>
            <person name="Hernandez-Lucas I."/>
            <person name="Hong A."/>
            <person name="Huizar L."/>
            <person name="Hyman R.W."/>
            <person name="Jones T."/>
            <person name="Kahn D."/>
            <person name="Kahn M.L."/>
            <person name="Kalman S."/>
            <person name="Keating D.H."/>
            <person name="Kiss E."/>
            <person name="Komp C."/>
            <person name="Lelaure V."/>
            <person name="Masuy D."/>
            <person name="Palm C."/>
            <person name="Peck M.C."/>
            <person name="Pohl T.M."/>
            <person name="Portetelle D."/>
            <person name="Purnelle B."/>
            <person name="Ramsperger U."/>
            <person name="Surzycki R."/>
            <person name="Thebault P."/>
            <person name="Vandenbol M."/>
            <person name="Vorhoelter F.J."/>
            <person name="Weidner S."/>
            <person name="Wells D.H."/>
            <person name="Wong K."/>
            <person name="Yeh K.-C."/>
            <person name="Batut J."/>
        </authorList>
    </citation>
    <scope>NUCLEOTIDE SEQUENCE [LARGE SCALE GENOMIC DNA]</scope>
    <source>
        <strain>1021</strain>
    </source>
</reference>
<sequence length="68" mass="7444">MGSFSIWHWLIVLAVVLLLFGRGKIPELMGDVAKGIKNFKKGMGDDEVASADKSVDGKTVDHKSDEVR</sequence>